<protein>
    <recommendedName>
        <fullName evidence="1">Pyridoxine/pyridoxamine 5'-phosphate oxidase</fullName>
        <ecNumber evidence="1">1.4.3.5</ecNumber>
    </recommendedName>
    <alternativeName>
        <fullName evidence="1">PNP/PMP oxidase</fullName>
        <shortName evidence="1">PNPOx</shortName>
    </alternativeName>
    <alternativeName>
        <fullName evidence="1">Pyridoxal 5'-phosphate synthase</fullName>
    </alternativeName>
</protein>
<name>PDXH_AZOVD</name>
<accession>C1DEH4</accession>
<gene>
    <name evidence="1" type="primary">pdxH</name>
    <name type="ordered locus">Avin_19500</name>
</gene>
<sequence>MPQTLADMRRDYSRSGLCEAEAPLEPFSLFHQWFAEAMKTEQLPVEPNAMSLATVDGNGRPHCRVLLLKGVDERGFTFFSNYESAKGQQLRARPFAAMTFFWPTLERQVRIEGEVEKVSSQESDAYFQVRPLGSRLGAWASPQSRVIRDRTELEELLALTEKRFLDQAPHCPGHWGGYRLLPDRIEFWQGRASRLHDRLNYRLEKGGWVRERLAP</sequence>
<evidence type="ECO:0000255" key="1">
    <source>
        <dbReference type="HAMAP-Rule" id="MF_01629"/>
    </source>
</evidence>
<feature type="chain" id="PRO_1000215760" description="Pyridoxine/pyridoxamine 5'-phosphate oxidase">
    <location>
        <begin position="1"/>
        <end position="215"/>
    </location>
</feature>
<feature type="binding site" evidence="1">
    <location>
        <begin position="9"/>
        <end position="12"/>
    </location>
    <ligand>
        <name>substrate</name>
    </ligand>
</feature>
<feature type="binding site" evidence="1">
    <location>
        <begin position="64"/>
        <end position="69"/>
    </location>
    <ligand>
        <name>FMN</name>
        <dbReference type="ChEBI" id="CHEBI:58210"/>
    </ligand>
</feature>
<feature type="binding site" evidence="1">
    <location>
        <position position="69"/>
    </location>
    <ligand>
        <name>substrate</name>
    </ligand>
</feature>
<feature type="binding site" evidence="1">
    <location>
        <begin position="79"/>
        <end position="80"/>
    </location>
    <ligand>
        <name>FMN</name>
        <dbReference type="ChEBI" id="CHEBI:58210"/>
    </ligand>
</feature>
<feature type="binding site" evidence="1">
    <location>
        <position position="86"/>
    </location>
    <ligand>
        <name>FMN</name>
        <dbReference type="ChEBI" id="CHEBI:58210"/>
    </ligand>
</feature>
<feature type="binding site" evidence="1">
    <location>
        <position position="108"/>
    </location>
    <ligand>
        <name>FMN</name>
        <dbReference type="ChEBI" id="CHEBI:58210"/>
    </ligand>
</feature>
<feature type="binding site" evidence="1">
    <location>
        <position position="126"/>
    </location>
    <ligand>
        <name>substrate</name>
    </ligand>
</feature>
<feature type="binding site" evidence="1">
    <location>
        <position position="130"/>
    </location>
    <ligand>
        <name>substrate</name>
    </ligand>
</feature>
<feature type="binding site" evidence="1">
    <location>
        <position position="134"/>
    </location>
    <ligand>
        <name>substrate</name>
    </ligand>
</feature>
<feature type="binding site" evidence="1">
    <location>
        <begin position="143"/>
        <end position="144"/>
    </location>
    <ligand>
        <name>FMN</name>
        <dbReference type="ChEBI" id="CHEBI:58210"/>
    </ligand>
</feature>
<feature type="binding site" evidence="1">
    <location>
        <position position="188"/>
    </location>
    <ligand>
        <name>FMN</name>
        <dbReference type="ChEBI" id="CHEBI:58210"/>
    </ligand>
</feature>
<feature type="binding site" evidence="1">
    <location>
        <begin position="194"/>
        <end position="196"/>
    </location>
    <ligand>
        <name>substrate</name>
    </ligand>
</feature>
<feature type="binding site" evidence="1">
    <location>
        <position position="198"/>
    </location>
    <ligand>
        <name>FMN</name>
        <dbReference type="ChEBI" id="CHEBI:58210"/>
    </ligand>
</feature>
<proteinExistence type="inferred from homology"/>
<organism>
    <name type="scientific">Azotobacter vinelandii (strain DJ / ATCC BAA-1303)</name>
    <dbReference type="NCBI Taxonomy" id="322710"/>
    <lineage>
        <taxon>Bacteria</taxon>
        <taxon>Pseudomonadati</taxon>
        <taxon>Pseudomonadota</taxon>
        <taxon>Gammaproteobacteria</taxon>
        <taxon>Pseudomonadales</taxon>
        <taxon>Pseudomonadaceae</taxon>
        <taxon>Azotobacter</taxon>
    </lineage>
</organism>
<dbReference type="EC" id="1.4.3.5" evidence="1"/>
<dbReference type="EMBL" id="CP001157">
    <property type="protein sequence ID" value="ACO78159.1"/>
    <property type="molecule type" value="Genomic_DNA"/>
</dbReference>
<dbReference type="RefSeq" id="WP_012700568.1">
    <property type="nucleotide sequence ID" value="NC_012560.1"/>
</dbReference>
<dbReference type="SMR" id="C1DEH4"/>
<dbReference type="STRING" id="322710.Avin_19500"/>
<dbReference type="EnsemblBacteria" id="ACO78159">
    <property type="protein sequence ID" value="ACO78159"/>
    <property type="gene ID" value="Avin_19500"/>
</dbReference>
<dbReference type="GeneID" id="88185189"/>
<dbReference type="KEGG" id="avn:Avin_19500"/>
<dbReference type="eggNOG" id="COG0259">
    <property type="taxonomic scope" value="Bacteria"/>
</dbReference>
<dbReference type="HOGENOM" id="CLU_032263_2_2_6"/>
<dbReference type="OrthoDB" id="9780392at2"/>
<dbReference type="UniPathway" id="UPA01068">
    <property type="reaction ID" value="UER00304"/>
</dbReference>
<dbReference type="UniPathway" id="UPA01068">
    <property type="reaction ID" value="UER00305"/>
</dbReference>
<dbReference type="Proteomes" id="UP000002424">
    <property type="component" value="Chromosome"/>
</dbReference>
<dbReference type="GO" id="GO:0010181">
    <property type="term" value="F:FMN binding"/>
    <property type="evidence" value="ECO:0007669"/>
    <property type="project" value="UniProtKB-UniRule"/>
</dbReference>
<dbReference type="GO" id="GO:0004733">
    <property type="term" value="F:pyridoxamine phosphate oxidase activity"/>
    <property type="evidence" value="ECO:0007669"/>
    <property type="project" value="UniProtKB-UniRule"/>
</dbReference>
<dbReference type="GO" id="GO:0008615">
    <property type="term" value="P:pyridoxine biosynthetic process"/>
    <property type="evidence" value="ECO:0007669"/>
    <property type="project" value="UniProtKB-KW"/>
</dbReference>
<dbReference type="Gene3D" id="2.30.110.10">
    <property type="entry name" value="Electron Transport, Fmn-binding Protein, Chain A"/>
    <property type="match status" value="1"/>
</dbReference>
<dbReference type="HAMAP" id="MF_01629">
    <property type="entry name" value="PdxH"/>
    <property type="match status" value="1"/>
</dbReference>
<dbReference type="InterPro" id="IPR000659">
    <property type="entry name" value="Pyridox_Oxase"/>
</dbReference>
<dbReference type="InterPro" id="IPR019740">
    <property type="entry name" value="Pyridox_Oxase_CS"/>
</dbReference>
<dbReference type="InterPro" id="IPR011576">
    <property type="entry name" value="Pyridox_Oxase_N"/>
</dbReference>
<dbReference type="InterPro" id="IPR019576">
    <property type="entry name" value="Pyridoxamine_oxidase_dimer_C"/>
</dbReference>
<dbReference type="InterPro" id="IPR012349">
    <property type="entry name" value="Split_barrel_FMN-bd"/>
</dbReference>
<dbReference type="NCBIfam" id="TIGR00558">
    <property type="entry name" value="pdxH"/>
    <property type="match status" value="1"/>
</dbReference>
<dbReference type="NCBIfam" id="NF004231">
    <property type="entry name" value="PRK05679.1"/>
    <property type="match status" value="1"/>
</dbReference>
<dbReference type="PANTHER" id="PTHR10851:SF0">
    <property type="entry name" value="PYRIDOXINE-5'-PHOSPHATE OXIDASE"/>
    <property type="match status" value="1"/>
</dbReference>
<dbReference type="PANTHER" id="PTHR10851">
    <property type="entry name" value="PYRIDOXINE-5-PHOSPHATE OXIDASE"/>
    <property type="match status" value="1"/>
</dbReference>
<dbReference type="Pfam" id="PF10590">
    <property type="entry name" value="PNP_phzG_C"/>
    <property type="match status" value="1"/>
</dbReference>
<dbReference type="Pfam" id="PF01243">
    <property type="entry name" value="PNPOx_N"/>
    <property type="match status" value="1"/>
</dbReference>
<dbReference type="PIRSF" id="PIRSF000190">
    <property type="entry name" value="Pyd_amn-ph_oxd"/>
    <property type="match status" value="1"/>
</dbReference>
<dbReference type="SUPFAM" id="SSF50475">
    <property type="entry name" value="FMN-binding split barrel"/>
    <property type="match status" value="1"/>
</dbReference>
<dbReference type="PROSITE" id="PS01064">
    <property type="entry name" value="PYRIDOX_OXIDASE"/>
    <property type="match status" value="1"/>
</dbReference>
<keyword id="KW-0285">Flavoprotein</keyword>
<keyword id="KW-0288">FMN</keyword>
<keyword id="KW-0560">Oxidoreductase</keyword>
<keyword id="KW-0664">Pyridoxine biosynthesis</keyword>
<reference key="1">
    <citation type="journal article" date="2009" name="J. Bacteriol.">
        <title>Genome sequence of Azotobacter vinelandii, an obligate aerobe specialized to support diverse anaerobic metabolic processes.</title>
        <authorList>
            <person name="Setubal J.C."/>
            <person name="Dos Santos P."/>
            <person name="Goldman B.S."/>
            <person name="Ertesvaag H."/>
            <person name="Espin G."/>
            <person name="Rubio L.M."/>
            <person name="Valla S."/>
            <person name="Almeida N.F."/>
            <person name="Balasubramanian D."/>
            <person name="Cromes L."/>
            <person name="Curatti L."/>
            <person name="Du Z."/>
            <person name="Godsy E."/>
            <person name="Goodner B."/>
            <person name="Hellner-Burris K."/>
            <person name="Hernandez J.A."/>
            <person name="Houmiel K."/>
            <person name="Imperial J."/>
            <person name="Kennedy C."/>
            <person name="Larson T.J."/>
            <person name="Latreille P."/>
            <person name="Ligon L.S."/>
            <person name="Lu J."/>
            <person name="Maerk M."/>
            <person name="Miller N.M."/>
            <person name="Norton S."/>
            <person name="O'Carroll I.P."/>
            <person name="Paulsen I."/>
            <person name="Raulfs E.C."/>
            <person name="Roemer R."/>
            <person name="Rosser J."/>
            <person name="Segura D."/>
            <person name="Slater S."/>
            <person name="Stricklin S.L."/>
            <person name="Studholme D.J."/>
            <person name="Sun J."/>
            <person name="Viana C.J."/>
            <person name="Wallin E."/>
            <person name="Wang B."/>
            <person name="Wheeler C."/>
            <person name="Zhu H."/>
            <person name="Dean D.R."/>
            <person name="Dixon R."/>
            <person name="Wood D."/>
        </authorList>
    </citation>
    <scope>NUCLEOTIDE SEQUENCE [LARGE SCALE GENOMIC DNA]</scope>
    <source>
        <strain>DJ / ATCC BAA-1303</strain>
    </source>
</reference>
<comment type="function">
    <text evidence="1">Catalyzes the oxidation of either pyridoxine 5'-phosphate (PNP) or pyridoxamine 5'-phosphate (PMP) into pyridoxal 5'-phosphate (PLP).</text>
</comment>
<comment type="catalytic activity">
    <reaction evidence="1">
        <text>pyridoxamine 5'-phosphate + O2 + H2O = pyridoxal 5'-phosphate + H2O2 + NH4(+)</text>
        <dbReference type="Rhea" id="RHEA:15817"/>
        <dbReference type="ChEBI" id="CHEBI:15377"/>
        <dbReference type="ChEBI" id="CHEBI:15379"/>
        <dbReference type="ChEBI" id="CHEBI:16240"/>
        <dbReference type="ChEBI" id="CHEBI:28938"/>
        <dbReference type="ChEBI" id="CHEBI:58451"/>
        <dbReference type="ChEBI" id="CHEBI:597326"/>
        <dbReference type="EC" id="1.4.3.5"/>
    </reaction>
</comment>
<comment type="catalytic activity">
    <reaction evidence="1">
        <text>pyridoxine 5'-phosphate + O2 = pyridoxal 5'-phosphate + H2O2</text>
        <dbReference type="Rhea" id="RHEA:15149"/>
        <dbReference type="ChEBI" id="CHEBI:15379"/>
        <dbReference type="ChEBI" id="CHEBI:16240"/>
        <dbReference type="ChEBI" id="CHEBI:58589"/>
        <dbReference type="ChEBI" id="CHEBI:597326"/>
        <dbReference type="EC" id="1.4.3.5"/>
    </reaction>
</comment>
<comment type="cofactor">
    <cofactor evidence="1">
        <name>FMN</name>
        <dbReference type="ChEBI" id="CHEBI:58210"/>
    </cofactor>
    <text evidence="1">Binds 1 FMN per subunit.</text>
</comment>
<comment type="pathway">
    <text evidence="1">Cofactor metabolism; pyridoxal 5'-phosphate salvage; pyridoxal 5'-phosphate from pyridoxamine 5'-phosphate: step 1/1.</text>
</comment>
<comment type="pathway">
    <text evidence="1">Cofactor metabolism; pyridoxal 5'-phosphate salvage; pyridoxal 5'-phosphate from pyridoxine 5'-phosphate: step 1/1.</text>
</comment>
<comment type="subunit">
    <text evidence="1">Homodimer.</text>
</comment>
<comment type="similarity">
    <text evidence="1">Belongs to the pyridoxamine 5'-phosphate oxidase family.</text>
</comment>